<gene>
    <name type="primary">Smn1</name>
    <name type="synonym">Smn</name>
</gene>
<accession>O35876</accession>
<accession>O55045</accession>
<dbReference type="EMBL" id="U75369">
    <property type="protein sequence ID" value="AAB96377.1"/>
    <property type="molecule type" value="mRNA"/>
</dbReference>
<dbReference type="EMBL" id="AF044910">
    <property type="protein sequence ID" value="AAC01747.1"/>
    <property type="molecule type" value="mRNA"/>
</dbReference>
<dbReference type="RefSeq" id="NP_071954.1">
    <property type="nucleotide sequence ID" value="NM_022509.1"/>
</dbReference>
<dbReference type="BMRB" id="O35876"/>
<dbReference type="SMR" id="O35876"/>
<dbReference type="BioGRID" id="249016">
    <property type="interactions" value="1"/>
</dbReference>
<dbReference type="FunCoup" id="O35876">
    <property type="interactions" value="289"/>
</dbReference>
<dbReference type="IntAct" id="O35876">
    <property type="interactions" value="1"/>
</dbReference>
<dbReference type="STRING" id="10116.ENSRNOP00000024456"/>
<dbReference type="iPTMnet" id="O35876"/>
<dbReference type="PhosphoSitePlus" id="O35876"/>
<dbReference type="PaxDb" id="10116-ENSRNOP00000024456"/>
<dbReference type="GeneID" id="64301"/>
<dbReference type="KEGG" id="rno:64301"/>
<dbReference type="UCSC" id="RGD:620755">
    <property type="organism name" value="rat"/>
</dbReference>
<dbReference type="AGR" id="RGD:620755"/>
<dbReference type="CTD" id="6606"/>
<dbReference type="RGD" id="620755">
    <property type="gene designation" value="Smn1"/>
</dbReference>
<dbReference type="eggNOG" id="KOG4327">
    <property type="taxonomic scope" value="Eukaryota"/>
</dbReference>
<dbReference type="InParanoid" id="O35876"/>
<dbReference type="PhylomeDB" id="O35876"/>
<dbReference type="Reactome" id="R-RNO-191859">
    <property type="pathway name" value="snRNP Assembly"/>
</dbReference>
<dbReference type="PRO" id="PR:O35876"/>
<dbReference type="Proteomes" id="UP000002494">
    <property type="component" value="Unplaced"/>
</dbReference>
<dbReference type="GO" id="GO:0015030">
    <property type="term" value="C:Cajal body"/>
    <property type="evidence" value="ECO:0000250"/>
    <property type="project" value="UniProtKB"/>
</dbReference>
<dbReference type="GO" id="GO:0030137">
    <property type="term" value="C:COPI-coated vesicle"/>
    <property type="evidence" value="ECO:0000266"/>
    <property type="project" value="RGD"/>
</dbReference>
<dbReference type="GO" id="GO:0005737">
    <property type="term" value="C:cytoplasm"/>
    <property type="evidence" value="ECO:0000266"/>
    <property type="project" value="RGD"/>
</dbReference>
<dbReference type="GO" id="GO:0036464">
    <property type="term" value="C:cytoplasmic ribonucleoprotein granule"/>
    <property type="evidence" value="ECO:0000250"/>
    <property type="project" value="UniProtKB"/>
</dbReference>
<dbReference type="GO" id="GO:0005829">
    <property type="term" value="C:cytosol"/>
    <property type="evidence" value="ECO:0000250"/>
    <property type="project" value="UniProtKB"/>
</dbReference>
<dbReference type="GO" id="GO:0097504">
    <property type="term" value="C:Gemini of Cajal bodies"/>
    <property type="evidence" value="ECO:0000314"/>
    <property type="project" value="RGD"/>
</dbReference>
<dbReference type="GO" id="GO:0005794">
    <property type="term" value="C:Golgi apparatus"/>
    <property type="evidence" value="ECO:0000266"/>
    <property type="project" value="RGD"/>
</dbReference>
<dbReference type="GO" id="GO:0030426">
    <property type="term" value="C:growth cone"/>
    <property type="evidence" value="ECO:0000266"/>
    <property type="project" value="RGD"/>
</dbReference>
<dbReference type="GO" id="GO:0043005">
    <property type="term" value="C:neuron projection"/>
    <property type="evidence" value="ECO:0000250"/>
    <property type="project" value="UniProtKB"/>
</dbReference>
<dbReference type="GO" id="GO:0005654">
    <property type="term" value="C:nucleoplasm"/>
    <property type="evidence" value="ECO:0000250"/>
    <property type="project" value="UniProtKB"/>
</dbReference>
<dbReference type="GO" id="GO:0005634">
    <property type="term" value="C:nucleus"/>
    <property type="evidence" value="ECO:0000250"/>
    <property type="project" value="UniProtKB"/>
</dbReference>
<dbReference type="GO" id="GO:0043204">
    <property type="term" value="C:perikaryon"/>
    <property type="evidence" value="ECO:0000250"/>
    <property type="project" value="UniProtKB"/>
</dbReference>
<dbReference type="GO" id="GO:0032797">
    <property type="term" value="C:SMN complex"/>
    <property type="evidence" value="ECO:0000250"/>
    <property type="project" value="UniProtKB"/>
</dbReference>
<dbReference type="GO" id="GO:0034719">
    <property type="term" value="C:SMN-Sm protein complex"/>
    <property type="evidence" value="ECO:0000250"/>
    <property type="project" value="UniProtKB"/>
</dbReference>
<dbReference type="GO" id="GO:0030018">
    <property type="term" value="C:Z disc"/>
    <property type="evidence" value="ECO:0007669"/>
    <property type="project" value="UniProtKB-SubCell"/>
</dbReference>
<dbReference type="GO" id="GO:0017134">
    <property type="term" value="F:fibroblast growth factor binding"/>
    <property type="evidence" value="ECO:0000353"/>
    <property type="project" value="RGD"/>
</dbReference>
<dbReference type="GO" id="GO:0042802">
    <property type="term" value="F:identical protein binding"/>
    <property type="evidence" value="ECO:0000266"/>
    <property type="project" value="RGD"/>
</dbReference>
<dbReference type="GO" id="GO:0003723">
    <property type="term" value="F:RNA binding"/>
    <property type="evidence" value="ECO:0007669"/>
    <property type="project" value="UniProtKB-KW"/>
</dbReference>
<dbReference type="GO" id="GO:0007409">
    <property type="term" value="P:axonogenesis"/>
    <property type="evidence" value="ECO:0000266"/>
    <property type="project" value="RGD"/>
</dbReference>
<dbReference type="GO" id="GO:0007268">
    <property type="term" value="P:chemical synaptic transmission"/>
    <property type="evidence" value="ECO:0000270"/>
    <property type="project" value="RGD"/>
</dbReference>
<dbReference type="GO" id="GO:0006353">
    <property type="term" value="P:DNA-templated transcription termination"/>
    <property type="evidence" value="ECO:0000250"/>
    <property type="project" value="UniProtKB"/>
</dbReference>
<dbReference type="GO" id="GO:0007019">
    <property type="term" value="P:microtubule depolymerization"/>
    <property type="evidence" value="ECO:0000266"/>
    <property type="project" value="RGD"/>
</dbReference>
<dbReference type="GO" id="GO:0033120">
    <property type="term" value="P:positive regulation of RNA splicing"/>
    <property type="evidence" value="ECO:0000266"/>
    <property type="project" value="RGD"/>
</dbReference>
<dbReference type="GO" id="GO:0010975">
    <property type="term" value="P:regulation of neuron projection development"/>
    <property type="evidence" value="ECO:0000266"/>
    <property type="project" value="RGD"/>
</dbReference>
<dbReference type="GO" id="GO:0000245">
    <property type="term" value="P:spliceosomal complex assembly"/>
    <property type="evidence" value="ECO:0000266"/>
    <property type="project" value="RGD"/>
</dbReference>
<dbReference type="GO" id="GO:0000387">
    <property type="term" value="P:spliceosomal snRNP assembly"/>
    <property type="evidence" value="ECO:0000250"/>
    <property type="project" value="UniProtKB"/>
</dbReference>
<dbReference type="CDD" id="cd22852">
    <property type="entry name" value="SMN_C"/>
    <property type="match status" value="1"/>
</dbReference>
<dbReference type="CDD" id="cd22851">
    <property type="entry name" value="SMN_N"/>
    <property type="match status" value="1"/>
</dbReference>
<dbReference type="CDD" id="cd20398">
    <property type="entry name" value="Tudor_SMN"/>
    <property type="match status" value="1"/>
</dbReference>
<dbReference type="FunFam" id="3.40.190.10:FF:000110">
    <property type="entry name" value="Survival motor neuron protein 1"/>
    <property type="match status" value="1"/>
</dbReference>
<dbReference type="FunFam" id="2.30.30.140:FF:000038">
    <property type="entry name" value="Survival of motor neuron-related-splicing factor 30"/>
    <property type="match status" value="1"/>
</dbReference>
<dbReference type="Gene3D" id="2.30.30.140">
    <property type="match status" value="1"/>
</dbReference>
<dbReference type="Gene3D" id="3.40.190.10">
    <property type="entry name" value="Periplasmic binding protein-like II"/>
    <property type="match status" value="1"/>
</dbReference>
<dbReference type="InterPro" id="IPR040424">
    <property type="entry name" value="Smn1"/>
</dbReference>
<dbReference type="InterPro" id="IPR047313">
    <property type="entry name" value="SMN_C"/>
</dbReference>
<dbReference type="InterPro" id="IPR049481">
    <property type="entry name" value="SMN_G2-BD"/>
</dbReference>
<dbReference type="InterPro" id="IPR010304">
    <property type="entry name" value="SMN_Tudor"/>
</dbReference>
<dbReference type="InterPro" id="IPR002999">
    <property type="entry name" value="Tudor"/>
</dbReference>
<dbReference type="InterPro" id="IPR047298">
    <property type="entry name" value="Tudor_SMN_eumet"/>
</dbReference>
<dbReference type="PANTHER" id="PTHR39267:SF1">
    <property type="entry name" value="SURVIVAL MOTOR NEURON PROTEIN"/>
    <property type="match status" value="1"/>
</dbReference>
<dbReference type="PANTHER" id="PTHR39267">
    <property type="entry name" value="SURVIVAL MOTOR NEURON-LIKE PROTEIN 1"/>
    <property type="match status" value="1"/>
</dbReference>
<dbReference type="Pfam" id="PF20636">
    <property type="entry name" value="SMN_G2-BD"/>
    <property type="match status" value="1"/>
</dbReference>
<dbReference type="Pfam" id="PF06003">
    <property type="entry name" value="SMN_Tudor"/>
    <property type="match status" value="1"/>
</dbReference>
<dbReference type="Pfam" id="PF20635">
    <property type="entry name" value="SMN_YG-box"/>
    <property type="match status" value="1"/>
</dbReference>
<dbReference type="SMART" id="SM00333">
    <property type="entry name" value="TUDOR"/>
    <property type="match status" value="1"/>
</dbReference>
<dbReference type="SUPFAM" id="SSF63748">
    <property type="entry name" value="Tudor/PWWP/MBT"/>
    <property type="match status" value="1"/>
</dbReference>
<dbReference type="PROSITE" id="PS50304">
    <property type="entry name" value="TUDOR"/>
    <property type="match status" value="1"/>
</dbReference>
<keyword id="KW-0966">Cell projection</keyword>
<keyword id="KW-0963">Cytoplasm</keyword>
<keyword id="KW-1017">Isopeptide bond</keyword>
<keyword id="KW-0507">mRNA processing</keyword>
<keyword id="KW-0508">mRNA splicing</keyword>
<keyword id="KW-0524">Neurogenesis</keyword>
<keyword id="KW-0539">Nucleus</keyword>
<keyword id="KW-0597">Phosphoprotein</keyword>
<keyword id="KW-1185">Reference proteome</keyword>
<keyword id="KW-0694">RNA-binding</keyword>
<keyword id="KW-0832">Ubl conjugation</keyword>
<feature type="chain" id="PRO_0000218905" description="Survival motor neuron protein">
    <location>
        <begin position="1"/>
        <end position="289"/>
    </location>
</feature>
<feature type="domain" description="Tudor" evidence="4">
    <location>
        <begin position="89"/>
        <end position="149"/>
    </location>
</feature>
<feature type="region of interest" description="Disordered" evidence="5">
    <location>
        <begin position="1"/>
        <end position="27"/>
    </location>
</feature>
<feature type="region of interest" description="P1 (binding site for GEMIN2)" evidence="1">
    <location>
        <begin position="11"/>
        <end position="42"/>
    </location>
</feature>
<feature type="region of interest" description="Disordered" evidence="5">
    <location>
        <begin position="55"/>
        <end position="88"/>
    </location>
</feature>
<feature type="region of interest" description="Required for interaction with RPP20/POP7" evidence="1">
    <location>
        <begin position="95"/>
        <end position="205"/>
    </location>
</feature>
<feature type="region of interest" description="Disordered" evidence="5">
    <location>
        <begin position="150"/>
        <end position="226"/>
    </location>
</feature>
<feature type="region of interest" description="P2 (binding site for SM B)" evidence="1">
    <location>
        <begin position="235"/>
        <end position="262"/>
    </location>
</feature>
<feature type="region of interest" description="Required for interaction with SYNCRIP" evidence="1">
    <location>
        <begin position="274"/>
        <end position="289"/>
    </location>
</feature>
<feature type="compositionally biased region" description="Gly residues" evidence="5">
    <location>
        <begin position="1"/>
        <end position="10"/>
    </location>
</feature>
<feature type="compositionally biased region" description="Basic residues" evidence="5">
    <location>
        <begin position="66"/>
        <end position="80"/>
    </location>
</feature>
<feature type="compositionally biased region" description="Basic residues" evidence="5">
    <location>
        <begin position="171"/>
        <end position="181"/>
    </location>
</feature>
<feature type="compositionally biased region" description="Pro residues" evidence="5">
    <location>
        <begin position="212"/>
        <end position="226"/>
    </location>
</feature>
<feature type="modified residue" description="Phosphothreonine" evidence="8">
    <location>
        <position position="23"/>
    </location>
</feature>
<feature type="modified residue" description="Phosphoserine" evidence="8">
    <location>
        <position position="26"/>
    </location>
</feature>
<feature type="modified residue" description="Phosphoserine" evidence="8">
    <location>
        <position position="29"/>
    </location>
</feature>
<feature type="modified residue" description="Phosphothreonine" evidence="3">
    <location>
        <position position="67"/>
    </location>
</feature>
<feature type="cross-link" description="Glycyl lysine isopeptide (Lys-Gly) (interchain with G-Cter in SUMO2)" evidence="3">
    <location>
        <position position="49"/>
    </location>
</feature>
<feature type="cross-link" description="Glycyl lysine isopeptide (Lys-Gly) (interchain with G-Cter in SUMO2)" evidence="3">
    <location>
        <position position="205"/>
    </location>
</feature>
<feature type="sequence conflict" description="In Ref. 2; AAC01747." evidence="7" ref="2">
    <location>
        <position position="8"/>
    </location>
</feature>
<feature type="sequence conflict" description="In Ref. 2; AAC01747." evidence="7" ref="2">
    <original>K</original>
    <variation>E</variation>
    <location>
        <position position="65"/>
    </location>
</feature>
<feature type="sequence conflict" description="In Ref. 2; AAC01747." evidence="7" ref="2">
    <original>S</original>
    <variation>N</variation>
    <location>
        <position position="211"/>
    </location>
</feature>
<proteinExistence type="evidence at protein level"/>
<evidence type="ECO:0000250" key="1"/>
<evidence type="ECO:0000250" key="2">
    <source>
        <dbReference type="UniProtKB" id="P97801"/>
    </source>
</evidence>
<evidence type="ECO:0000250" key="3">
    <source>
        <dbReference type="UniProtKB" id="Q16637"/>
    </source>
</evidence>
<evidence type="ECO:0000255" key="4">
    <source>
        <dbReference type="PROSITE-ProRule" id="PRU00211"/>
    </source>
</evidence>
<evidence type="ECO:0000256" key="5">
    <source>
        <dbReference type="SAM" id="MobiDB-lite"/>
    </source>
</evidence>
<evidence type="ECO:0000269" key="6">
    <source>
    </source>
</evidence>
<evidence type="ECO:0000305" key="7"/>
<evidence type="ECO:0007744" key="8">
    <source>
    </source>
</evidence>
<comment type="function">
    <text evidence="3">The SMN complex catalyzes the assembly of small nuclear ribonucleoproteins (snRNPs), the building blocks of the spliceosome, and thereby plays an important role in the splicing of cellular pre-mRNAs. Most spliceosomal snRNPs contain a common set of Sm proteins SNRPB, SNRPD1, SNRPD2, SNRPD3, SNRPE, SNRPF and SNRPG that assemble in a heptameric protein ring on the Sm site of the small nuclear RNA to form the core snRNP (Sm core). In the cytosol, the Sm proteins SNRPD1, SNRPD2, SNRPE, SNRPF and SNRPG are trapped in an inactive 6S pICln-Sm complex by the chaperone CLNS1A that controls the assembly of the core snRNP. To assemble core snRNPs, the SMN complex accepts the trapped 5Sm proteins from CLNS1A forming an intermediate. Binding of snRNA inside 5Sm ultimately triggers eviction of the SMN complex, thereby allowing binding of SNRPD3 and SNRPB to complete assembly of the core snRNP. Within the SMN complex, SMN1 acts as a structural backbone and together with GEMIN2 it gathers the Sm complex subunits. Ensures the correct splicing of U12 intron-containing genes that may be important for normal motor and proprioceptive neurons development. Also required for resolving RNA-DNA hybrids created by RNA polymerase II, that form R-loop in transcription terminal regions, an important step in proper transcription termination. May also play a role in the metabolism of small nucleolar ribonucleoprotein (snoRNPs).</text>
</comment>
<comment type="subunit">
    <text evidence="3 6">Homooligomer; may form higher order homooligomers in the dimer to octamer range. Part of the core SMN complex that contains SMN1, GEMIN2/SIP1, DDX20/GEMIN3, GEMIN4, GEMIN5, GEMIN6, GEMIN7, GEMIN8 and STRAP/UNRIP. Part of the SMN-Sm complex that contains SMN1, GEMIN2/SIP1, DDX20/GEMIN3, GEMIN4, GEMIN5, GEMIN6, GEMIN7, GEMIN8, STRAP/UNRIP and the Sm proteins SNRPB, SNRPD1, SNRPD2, SNRPD3, SNRPE, SNRPF and SNRPG. Component of an import snRNP complex composed of KPNB1, RNUT1, SMN1 and ZNF259. Interacts with DDX20, FBL, NOLA1, RNUT1 and with several spliceosomal snRNP core Sm proteins, including SNRPB, SNRPD1, SNRPD2, SNRPD3, SNRPE and ILF3. Interacts with GEMIN2; the interaction is direct. Interacts with GEMIN3; the interaction is direct. Interacts with GEMIN8; the interaction is direct. Interacts with SNRPB; the interaction is direct. Interacts (via Tudor domain) with SNRPD1 (via C-terminus); the interaction is direct. Interacts with SNRPD2; the interaction is direct. Interacts (via Tudor domain) with SNRPD3 (via C-terminus); the interaction is direct. Interacts with SNRPE; the interaction is direct. Interacts with OSTF1, LSM10, LSM11 and RPP20/POP7. Interacts (via C-terminal region) with ZPR1 (via C-terminal region). Interacts (via Tudor domain) with COIL. Interacts with SETX; recruits SETX to POLR2A. Interacts with POLR2A (via the C-terminal domain (CTD)). Interacts with PRMT5. Interacts with XRN2. Interacts (via C-terminus) with FMR1 (via C-terminus); the interaction is direct and occurs in a RNA-independent manner. Interacts with SYNCRIP. Interacts (via Tudor domain) with SF3B2 (methylated form) (By similarity). Interacts with WRAP53/TCAB1. Interacts (via Tudor domain) with ELAVL4 in an RNA-independent manner; the interaction is required for localization of ELAVL4 to RNA granules (PubMed:21389246). Interacts with FRG1 (By similarity).</text>
</comment>
<comment type="subcellular location">
    <subcellularLocation>
        <location evidence="3">Nucleus</location>
        <location evidence="3">Gem</location>
    </subcellularLocation>
    <subcellularLocation>
        <location evidence="3">Nucleus</location>
        <location evidence="3">Cajal body</location>
    </subcellularLocation>
    <subcellularLocation>
        <location evidence="3">Cytoplasm</location>
    </subcellularLocation>
    <subcellularLocation>
        <location evidence="3">Cytoplasmic granule</location>
    </subcellularLocation>
    <subcellularLocation>
        <location evidence="3">Perikaryon</location>
    </subcellularLocation>
    <subcellularLocation>
        <location evidence="3">Cell projection</location>
        <location evidence="3">Neuron projection</location>
    </subcellularLocation>
    <subcellularLocation>
        <location evidence="2">Cell projection</location>
        <location evidence="2">Axon</location>
    </subcellularLocation>
    <subcellularLocation>
        <location evidence="2">Cytoplasm</location>
        <location evidence="2">Myofibril</location>
        <location evidence="2">Sarcomere</location>
        <location evidence="2">Z line</location>
    </subcellularLocation>
    <text evidence="2 3">Colocalizes with actin and at the Z-line of skeletal muscle (By similarity). Under stress conditions colocalizes with RPP20/POP7 in punctuated cytoplasmic granules. Colocalized and redistributed with ZPR1 from the cytoplasm to nuclear gems (Gemini of coiled bodies) and Cajal bodies. Colocalizes with FMR1 in cytoplasmic granules in the soma and neurite cell processes (By similarity).</text>
</comment>
<comment type="domain">
    <text evidence="3">The Tudor domain mediates association with dimethylarginines, which are common in snRNP proteins.</text>
</comment>
<comment type="similarity">
    <text evidence="7">Belongs to the SMN family.</text>
</comment>
<organism>
    <name type="scientific">Rattus norvegicus</name>
    <name type="common">Rat</name>
    <dbReference type="NCBI Taxonomy" id="10116"/>
    <lineage>
        <taxon>Eukaryota</taxon>
        <taxon>Metazoa</taxon>
        <taxon>Chordata</taxon>
        <taxon>Craniata</taxon>
        <taxon>Vertebrata</taxon>
        <taxon>Euteleostomi</taxon>
        <taxon>Mammalia</taxon>
        <taxon>Eutheria</taxon>
        <taxon>Euarchontoglires</taxon>
        <taxon>Glires</taxon>
        <taxon>Rodentia</taxon>
        <taxon>Myomorpha</taxon>
        <taxon>Muroidea</taxon>
        <taxon>Muridae</taxon>
        <taxon>Murinae</taxon>
        <taxon>Rattus</taxon>
    </lineage>
</organism>
<protein>
    <recommendedName>
        <fullName>Survival motor neuron protein</fullName>
    </recommendedName>
</protein>
<name>SMN_RAT</name>
<reference key="1">
    <citation type="journal article" date="1997" name="Hum. Mol. Genet.">
        <title>Expression of the SMN gene, the spinal muscular atrophy determining gene, in the mammalian central nervous system.</title>
        <authorList>
            <person name="Battaglia G."/>
            <person name="Princivalle A."/>
            <person name="Forti F."/>
            <person name="Lizier C."/>
            <person name="Zeviani M."/>
        </authorList>
    </citation>
    <scope>NUCLEOTIDE SEQUENCE [MRNA]</scope>
    <source>
        <strain>Sprague-Dawley</strain>
        <tissue>Liver</tissue>
    </source>
</reference>
<reference key="2">
    <citation type="journal article" date="1998" name="Eur. J. Neurosci.">
        <title>Survival motor neuron (SMN) protein in rat is expressed as different molecular forms and is developmentally regulated.</title>
        <authorList>
            <person name="La Bella V."/>
            <person name="Cisterni C."/>
            <person name="Salaun D."/>
            <person name="Pettmann B."/>
        </authorList>
    </citation>
    <scope>NUCLEOTIDE SEQUENCE [MRNA]</scope>
    <source>
        <strain>Sprague-Dawley</strain>
    </source>
</reference>
<reference key="3">
    <citation type="journal article" date="2011" name="J. Neurosci.">
        <title>The survival of motor neuron (SMN) protein interacts with the mRNA-binding protein HuD and regulates localization of poly(A) mRNA in primary motor neuron axons.</title>
        <authorList>
            <person name="Fallini C."/>
            <person name="Zhang H."/>
            <person name="Su Y."/>
            <person name="Silani V."/>
            <person name="Singer R.H."/>
            <person name="Rossoll W."/>
            <person name="Bassell G.J."/>
        </authorList>
    </citation>
    <scope>INTERACTION WITH ELAVL4</scope>
</reference>
<reference key="4">
    <citation type="journal article" date="2012" name="Nat. Commun.">
        <title>Quantitative maps of protein phosphorylation sites across 14 different rat organs and tissues.</title>
        <authorList>
            <person name="Lundby A."/>
            <person name="Secher A."/>
            <person name="Lage K."/>
            <person name="Nordsborg N.B."/>
            <person name="Dmytriyev A."/>
            <person name="Lundby C."/>
            <person name="Olsen J.V."/>
        </authorList>
    </citation>
    <scope>PHOSPHORYLATION [LARGE SCALE ANALYSIS] AT THR-23; SER-26 AND SER-29</scope>
    <scope>IDENTIFICATION BY MASS SPECTROMETRY [LARGE SCALE ANALYSIS]</scope>
</reference>
<sequence>MAMGSGGGAGSEQEDTVLFRRGTGQSDDSDIWDDTALIKAYDKAVASFKHALKNGDMCETSDKPKGTARRKPAKKNKNQKKNATAPLKQWKAGDKCSAVWSEDGCVYPATITSVDLKRETCVVVYTGYGNKEEQNLSDLLSPTCEVANNTEQNTQENESQVSTDDSEHSSRSLRSKAHSKSKAAPWTSFLPPPPPVPGAGLGPGKPGLRFSGPPPPPPPPPPFLPCWMPPFPSGPPIIPPPPPISPDCLDDTDALGSMLISWYMSGYHTGYYMGFRQNKKEGKKCSHTN</sequence>